<dbReference type="EMBL" id="FJ411284">
    <property type="protein sequence ID" value="ACR83845.1"/>
    <property type="molecule type" value="mRNA"/>
</dbReference>
<dbReference type="SMR" id="E3P6N9"/>
<dbReference type="MEROPS" id="I25.012"/>
<dbReference type="GO" id="GO:0070062">
    <property type="term" value="C:extracellular exosome"/>
    <property type="evidence" value="ECO:0007669"/>
    <property type="project" value="TreeGrafter"/>
</dbReference>
<dbReference type="GO" id="GO:0004869">
    <property type="term" value="F:cysteine-type endopeptidase inhibitor activity"/>
    <property type="evidence" value="ECO:0007669"/>
    <property type="project" value="UniProtKB-KW"/>
</dbReference>
<dbReference type="CDD" id="cd00042">
    <property type="entry name" value="CY"/>
    <property type="match status" value="1"/>
</dbReference>
<dbReference type="FunFam" id="3.10.450.10:FF:000004">
    <property type="entry name" value="Cystatin C"/>
    <property type="match status" value="1"/>
</dbReference>
<dbReference type="Gene3D" id="3.10.450.10">
    <property type="match status" value="1"/>
</dbReference>
<dbReference type="InterPro" id="IPR000010">
    <property type="entry name" value="Cystatin_dom"/>
</dbReference>
<dbReference type="InterPro" id="IPR046350">
    <property type="entry name" value="Cystatin_sf"/>
</dbReference>
<dbReference type="PANTHER" id="PTHR47033">
    <property type="entry name" value="CYSTATIN-M"/>
    <property type="match status" value="1"/>
</dbReference>
<dbReference type="PANTHER" id="PTHR47033:SF1">
    <property type="entry name" value="CYSTATIN-M"/>
    <property type="match status" value="1"/>
</dbReference>
<dbReference type="Pfam" id="PF00031">
    <property type="entry name" value="Cystatin"/>
    <property type="match status" value="1"/>
</dbReference>
<dbReference type="SMART" id="SM00043">
    <property type="entry name" value="CY"/>
    <property type="match status" value="1"/>
</dbReference>
<dbReference type="SUPFAM" id="SSF54403">
    <property type="entry name" value="Cystatin/monellin"/>
    <property type="match status" value="1"/>
</dbReference>
<keyword id="KW-1015">Disulfide bond</keyword>
<keyword id="KW-0646">Protease inhibitor</keyword>
<keyword id="KW-0964">Secreted</keyword>
<keyword id="KW-0732">Signal</keyword>
<keyword id="KW-0789">Thiol protease inhibitor</keyword>
<comment type="function">
    <text evidence="1">Inhibits various C1 cysteine proteases including cathepsin L, papain and cathepsin B. This protein has no toxic activity and its function in the venom is unknown. It may play a role as a housekeeping or regulatory protein (By similarity).</text>
</comment>
<comment type="subcellular location">
    <subcellularLocation>
        <location>Secreted</location>
    </subcellularLocation>
</comment>
<comment type="tissue specificity">
    <text evidence="3">Expressed by the venom gland at an extremely low level (at protein level).</text>
</comment>
<comment type="miscellaneous">
    <text evidence="1">Negative results: the recombinant protein does not inhibit calpain-1 (CAPN1), a C2 family cysteine protease and legumain (LGMN), a C13 family cysteine protease. Does not provoke cell death (PC3 prostate cancer cells) (By similarity).</text>
</comment>
<comment type="similarity">
    <text evidence="2">Belongs to the cystatin family.</text>
</comment>
<name>CYT_TROCA</name>
<evidence type="ECO:0000250" key="1"/>
<evidence type="ECO:0000305" key="2"/>
<evidence type="ECO:0000305" key="3">
    <source>
    </source>
</evidence>
<accession>E3P6N9</accession>
<organism>
    <name type="scientific">Tropidechis carinatus</name>
    <name type="common">Australian rough-scaled snake</name>
    <dbReference type="NCBI Taxonomy" id="100989"/>
    <lineage>
        <taxon>Eukaryota</taxon>
        <taxon>Metazoa</taxon>
        <taxon>Chordata</taxon>
        <taxon>Craniata</taxon>
        <taxon>Vertebrata</taxon>
        <taxon>Euteleostomi</taxon>
        <taxon>Lepidosauria</taxon>
        <taxon>Squamata</taxon>
        <taxon>Bifurcata</taxon>
        <taxon>Unidentata</taxon>
        <taxon>Episquamata</taxon>
        <taxon>Toxicofera</taxon>
        <taxon>Serpentes</taxon>
        <taxon>Colubroidea</taxon>
        <taxon>Elapidae</taxon>
        <taxon>Notechinae</taxon>
        <taxon>Tropidechis</taxon>
    </lineage>
</organism>
<sequence>MVHSQLPVAAPLRLLCALLLLPSATMIPGGLYPRSVTDPDVQEAAECAVQEYNALSANAYYYKQLRIVEAQSQVVTGAKYYLTMELMKTKCAKTTGKPKVYKEIQNCELPPKAQQEKLTCHFQVWSRPWLQKIELTKMSCN</sequence>
<proteinExistence type="evidence at protein level"/>
<protein>
    <recommendedName>
        <fullName>Cystatin</fullName>
    </recommendedName>
</protein>
<reference key="1">
    <citation type="journal article" date="2011" name="Biochimie">
        <title>Cloning and characterisation of novel cystatins from elapid snake venom glands.</title>
        <authorList>
            <person name="Richards R."/>
            <person name="St Pierre L."/>
            <person name="Trabi M."/>
            <person name="Johnson L.A."/>
            <person name="de Jersey J."/>
            <person name="Masci P.P."/>
            <person name="Lavin M.F."/>
        </authorList>
    </citation>
    <scope>NUCLEOTIDE SEQUENCE [MRNA]</scope>
    <scope>LEVEL OF PROTEIN EXPRESSION</scope>
    <source>
        <tissue>Venom</tissue>
        <tissue>Venom gland</tissue>
    </source>
</reference>
<feature type="signal peptide" evidence="1">
    <location>
        <begin position="1"/>
        <end position="26"/>
    </location>
</feature>
<feature type="chain" id="PRO_5000654421" description="Cystatin">
    <location>
        <begin position="27"/>
        <end position="141"/>
    </location>
</feature>
<feature type="domain" description="Cystatin">
    <location>
        <begin position="29"/>
        <end position="129"/>
    </location>
</feature>
<feature type="short sequence motif" description="Secondary area of contact" evidence="1">
    <location>
        <begin position="73"/>
        <end position="77"/>
    </location>
</feature>
<feature type="site" description="Reactive site" evidence="1">
    <location>
        <position position="29"/>
    </location>
</feature>
<feature type="disulfide bond" evidence="1">
    <location>
        <begin position="91"/>
        <end position="107"/>
    </location>
</feature>
<feature type="disulfide bond" evidence="1">
    <location>
        <begin position="120"/>
        <end position="140"/>
    </location>
</feature>